<proteinExistence type="inferred from homology"/>
<keyword id="KW-0030">Aminoacyl-tRNA synthetase</keyword>
<keyword id="KW-0067">ATP-binding</keyword>
<keyword id="KW-0963">Cytoplasm</keyword>
<keyword id="KW-0436">Ligase</keyword>
<keyword id="KW-0479">Metal-binding</keyword>
<keyword id="KW-0547">Nucleotide-binding</keyword>
<keyword id="KW-0648">Protein biosynthesis</keyword>
<keyword id="KW-1185">Reference proteome</keyword>
<keyword id="KW-0862">Zinc</keyword>
<organism>
    <name type="scientific">Hahella chejuensis (strain KCTC 2396)</name>
    <dbReference type="NCBI Taxonomy" id="349521"/>
    <lineage>
        <taxon>Bacteria</taxon>
        <taxon>Pseudomonadati</taxon>
        <taxon>Pseudomonadota</taxon>
        <taxon>Gammaproteobacteria</taxon>
        <taxon>Oceanospirillales</taxon>
        <taxon>Hahellaceae</taxon>
        <taxon>Hahella</taxon>
    </lineage>
</organism>
<protein>
    <recommendedName>
        <fullName evidence="1">Cysteine--tRNA ligase</fullName>
        <ecNumber evidence="1">6.1.1.16</ecNumber>
    </recommendedName>
    <alternativeName>
        <fullName evidence="1">Cysteinyl-tRNA synthetase</fullName>
        <shortName evidence="1">CysRS</shortName>
    </alternativeName>
</protein>
<dbReference type="EC" id="6.1.1.16" evidence="1"/>
<dbReference type="EMBL" id="CP000155">
    <property type="protein sequence ID" value="ABC28984.1"/>
    <property type="molecule type" value="Genomic_DNA"/>
</dbReference>
<dbReference type="RefSeq" id="WP_011396054.1">
    <property type="nucleotide sequence ID" value="NC_007645.1"/>
</dbReference>
<dbReference type="SMR" id="Q2SK40"/>
<dbReference type="STRING" id="349521.HCH_02154"/>
<dbReference type="KEGG" id="hch:HCH_02154"/>
<dbReference type="eggNOG" id="COG0215">
    <property type="taxonomic scope" value="Bacteria"/>
</dbReference>
<dbReference type="HOGENOM" id="CLU_013528_0_1_6"/>
<dbReference type="OrthoDB" id="9815130at2"/>
<dbReference type="Proteomes" id="UP000000238">
    <property type="component" value="Chromosome"/>
</dbReference>
<dbReference type="GO" id="GO:0005829">
    <property type="term" value="C:cytosol"/>
    <property type="evidence" value="ECO:0007669"/>
    <property type="project" value="TreeGrafter"/>
</dbReference>
<dbReference type="GO" id="GO:0005524">
    <property type="term" value="F:ATP binding"/>
    <property type="evidence" value="ECO:0007669"/>
    <property type="project" value="UniProtKB-UniRule"/>
</dbReference>
<dbReference type="GO" id="GO:0004817">
    <property type="term" value="F:cysteine-tRNA ligase activity"/>
    <property type="evidence" value="ECO:0007669"/>
    <property type="project" value="UniProtKB-UniRule"/>
</dbReference>
<dbReference type="GO" id="GO:0008270">
    <property type="term" value="F:zinc ion binding"/>
    <property type="evidence" value="ECO:0007669"/>
    <property type="project" value="UniProtKB-UniRule"/>
</dbReference>
<dbReference type="GO" id="GO:0006423">
    <property type="term" value="P:cysteinyl-tRNA aminoacylation"/>
    <property type="evidence" value="ECO:0007669"/>
    <property type="project" value="UniProtKB-UniRule"/>
</dbReference>
<dbReference type="CDD" id="cd07963">
    <property type="entry name" value="Anticodon_Ia_Cys"/>
    <property type="match status" value="1"/>
</dbReference>
<dbReference type="CDD" id="cd00672">
    <property type="entry name" value="CysRS_core"/>
    <property type="match status" value="1"/>
</dbReference>
<dbReference type="FunFam" id="3.40.50.620:FF:000009">
    <property type="entry name" value="Cysteine--tRNA ligase"/>
    <property type="match status" value="1"/>
</dbReference>
<dbReference type="Gene3D" id="1.20.120.1910">
    <property type="entry name" value="Cysteine-tRNA ligase, C-terminal anti-codon recognition domain"/>
    <property type="match status" value="1"/>
</dbReference>
<dbReference type="Gene3D" id="3.40.50.620">
    <property type="entry name" value="HUPs"/>
    <property type="match status" value="1"/>
</dbReference>
<dbReference type="HAMAP" id="MF_00041">
    <property type="entry name" value="Cys_tRNA_synth"/>
    <property type="match status" value="1"/>
</dbReference>
<dbReference type="InterPro" id="IPR015803">
    <property type="entry name" value="Cys-tRNA-ligase"/>
</dbReference>
<dbReference type="InterPro" id="IPR015273">
    <property type="entry name" value="Cys-tRNA-synt_Ia_DALR"/>
</dbReference>
<dbReference type="InterPro" id="IPR024909">
    <property type="entry name" value="Cys-tRNA/MSH_ligase"/>
</dbReference>
<dbReference type="InterPro" id="IPR014729">
    <property type="entry name" value="Rossmann-like_a/b/a_fold"/>
</dbReference>
<dbReference type="InterPro" id="IPR032678">
    <property type="entry name" value="tRNA-synt_1_cat_dom"/>
</dbReference>
<dbReference type="InterPro" id="IPR009080">
    <property type="entry name" value="tRNAsynth_Ia_anticodon-bd"/>
</dbReference>
<dbReference type="NCBIfam" id="TIGR00435">
    <property type="entry name" value="cysS"/>
    <property type="match status" value="1"/>
</dbReference>
<dbReference type="PANTHER" id="PTHR10890:SF3">
    <property type="entry name" value="CYSTEINE--TRNA LIGASE, CYTOPLASMIC"/>
    <property type="match status" value="1"/>
</dbReference>
<dbReference type="PANTHER" id="PTHR10890">
    <property type="entry name" value="CYSTEINYL-TRNA SYNTHETASE"/>
    <property type="match status" value="1"/>
</dbReference>
<dbReference type="Pfam" id="PF09190">
    <property type="entry name" value="DALR_2"/>
    <property type="match status" value="1"/>
</dbReference>
<dbReference type="Pfam" id="PF01406">
    <property type="entry name" value="tRNA-synt_1e"/>
    <property type="match status" value="1"/>
</dbReference>
<dbReference type="PRINTS" id="PR00983">
    <property type="entry name" value="TRNASYNTHCYS"/>
</dbReference>
<dbReference type="SMART" id="SM00840">
    <property type="entry name" value="DALR_2"/>
    <property type="match status" value="1"/>
</dbReference>
<dbReference type="SUPFAM" id="SSF47323">
    <property type="entry name" value="Anticodon-binding domain of a subclass of class I aminoacyl-tRNA synthetases"/>
    <property type="match status" value="1"/>
</dbReference>
<dbReference type="SUPFAM" id="SSF52374">
    <property type="entry name" value="Nucleotidylyl transferase"/>
    <property type="match status" value="1"/>
</dbReference>
<feature type="chain" id="PRO_0000240917" description="Cysteine--tRNA ligase">
    <location>
        <begin position="1"/>
        <end position="467"/>
    </location>
</feature>
<feature type="short sequence motif" description="'HIGH' region">
    <location>
        <begin position="30"/>
        <end position="40"/>
    </location>
</feature>
<feature type="short sequence motif" description="'KMSKS' region">
    <location>
        <begin position="266"/>
        <end position="270"/>
    </location>
</feature>
<feature type="binding site" evidence="1">
    <location>
        <position position="28"/>
    </location>
    <ligand>
        <name>Zn(2+)</name>
        <dbReference type="ChEBI" id="CHEBI:29105"/>
    </ligand>
</feature>
<feature type="binding site" evidence="1">
    <location>
        <position position="209"/>
    </location>
    <ligand>
        <name>Zn(2+)</name>
        <dbReference type="ChEBI" id="CHEBI:29105"/>
    </ligand>
</feature>
<feature type="binding site" evidence="1">
    <location>
        <position position="234"/>
    </location>
    <ligand>
        <name>Zn(2+)</name>
        <dbReference type="ChEBI" id="CHEBI:29105"/>
    </ligand>
</feature>
<feature type="binding site" evidence="1">
    <location>
        <position position="238"/>
    </location>
    <ligand>
        <name>Zn(2+)</name>
        <dbReference type="ChEBI" id="CHEBI:29105"/>
    </ligand>
</feature>
<feature type="binding site" evidence="1">
    <location>
        <position position="269"/>
    </location>
    <ligand>
        <name>ATP</name>
        <dbReference type="ChEBI" id="CHEBI:30616"/>
    </ligand>
</feature>
<reference key="1">
    <citation type="journal article" date="2005" name="Nucleic Acids Res.">
        <title>Genomic blueprint of Hahella chejuensis, a marine microbe producing an algicidal agent.</title>
        <authorList>
            <person name="Jeong H."/>
            <person name="Yim J.H."/>
            <person name="Lee C."/>
            <person name="Choi S.-H."/>
            <person name="Park Y.K."/>
            <person name="Yoon S.H."/>
            <person name="Hur C.-G."/>
            <person name="Kang H.-Y."/>
            <person name="Kim D."/>
            <person name="Lee H.H."/>
            <person name="Park K.H."/>
            <person name="Park S.-H."/>
            <person name="Park H.-S."/>
            <person name="Lee H.K."/>
            <person name="Oh T.K."/>
            <person name="Kim J.F."/>
        </authorList>
    </citation>
    <scope>NUCLEOTIDE SEQUENCE [LARGE SCALE GENOMIC DNA]</scope>
    <source>
        <strain>KCTC 2396</strain>
    </source>
</reference>
<evidence type="ECO:0000255" key="1">
    <source>
        <dbReference type="HAMAP-Rule" id="MF_00041"/>
    </source>
</evidence>
<sequence>MLKIYSSLSQQKEEFKPIQAGKVGIYVCGMTVYDYCHLGHARVLVCFDIITRYLRAKGYDVNYVRNITDVDDKILNRARDNGESVDALTARFIDAMHEDERALGVLSPTSEPRATGHIDEIIAMIQRLMDKGYAYHASNGDVYYSVEQFADYGKLSKQKLDEIRAGARIEVDAEKRSPADFVLWKAAKPGELSWDSPWGEGRPGWHIECSAMSTRCLGDTFDIHGGGPDLKFPHHENEIAQSEAATGCKYVNYWMHAGAVRVNKEKMSKSLGNFFTIREILDKYPAEVVRYFLASSHYRSAIDYSDVALEEARSGLERLYNSIRELYGELGAVSMDEPLVGEYRERFHQAMDDDFNTSSAVAVLFDMAKAVNVAKKEDRTRALSLAKGMVDLAEVLGLLQADPESLMQGEGEEVGGLSVAEIEDFIAQRNAARANKDFAESDRIRDLLKEKGVLLNDSREGTSWQRA</sequence>
<accession>Q2SK40</accession>
<name>SYC_HAHCH</name>
<gene>
    <name evidence="1" type="primary">cysS</name>
    <name type="ordered locus">HCH_02154</name>
</gene>
<comment type="catalytic activity">
    <reaction evidence="1">
        <text>tRNA(Cys) + L-cysteine + ATP = L-cysteinyl-tRNA(Cys) + AMP + diphosphate</text>
        <dbReference type="Rhea" id="RHEA:17773"/>
        <dbReference type="Rhea" id="RHEA-COMP:9661"/>
        <dbReference type="Rhea" id="RHEA-COMP:9679"/>
        <dbReference type="ChEBI" id="CHEBI:30616"/>
        <dbReference type="ChEBI" id="CHEBI:33019"/>
        <dbReference type="ChEBI" id="CHEBI:35235"/>
        <dbReference type="ChEBI" id="CHEBI:78442"/>
        <dbReference type="ChEBI" id="CHEBI:78517"/>
        <dbReference type="ChEBI" id="CHEBI:456215"/>
        <dbReference type="EC" id="6.1.1.16"/>
    </reaction>
</comment>
<comment type="cofactor">
    <cofactor evidence="1">
        <name>Zn(2+)</name>
        <dbReference type="ChEBI" id="CHEBI:29105"/>
    </cofactor>
    <text evidence="1">Binds 1 zinc ion per subunit.</text>
</comment>
<comment type="subunit">
    <text evidence="1">Monomer.</text>
</comment>
<comment type="subcellular location">
    <subcellularLocation>
        <location evidence="1">Cytoplasm</location>
    </subcellularLocation>
</comment>
<comment type="similarity">
    <text evidence="1">Belongs to the class-I aminoacyl-tRNA synthetase family.</text>
</comment>